<organism>
    <name type="scientific">Anoxybacillus flavithermus (strain DSM 21510 / WK1)</name>
    <dbReference type="NCBI Taxonomy" id="491915"/>
    <lineage>
        <taxon>Bacteria</taxon>
        <taxon>Bacillati</taxon>
        <taxon>Bacillota</taxon>
        <taxon>Bacilli</taxon>
        <taxon>Bacillales</taxon>
        <taxon>Anoxybacillaceae</taxon>
        <taxon>Anoxybacillus</taxon>
    </lineage>
</organism>
<dbReference type="EMBL" id="CP000922">
    <property type="protein sequence ID" value="ACJ34656.1"/>
    <property type="status" value="ALT_INIT"/>
    <property type="molecule type" value="Genomic_DNA"/>
</dbReference>
<dbReference type="RefSeq" id="WP_041638879.1">
    <property type="nucleotide sequence ID" value="NC_011567.1"/>
</dbReference>
<dbReference type="STRING" id="491915.Aflv_2299"/>
<dbReference type="GeneID" id="7038551"/>
<dbReference type="KEGG" id="afl:Aflv_2299"/>
<dbReference type="PATRIC" id="fig|491915.6.peg.2367"/>
<dbReference type="eggNOG" id="COG4399">
    <property type="taxonomic scope" value="Bacteria"/>
</dbReference>
<dbReference type="HOGENOM" id="CLU_042384_0_0_9"/>
<dbReference type="Proteomes" id="UP000000742">
    <property type="component" value="Chromosome"/>
</dbReference>
<dbReference type="GO" id="GO:0005886">
    <property type="term" value="C:plasma membrane"/>
    <property type="evidence" value="ECO:0007669"/>
    <property type="project" value="UniProtKB-SubCell"/>
</dbReference>
<dbReference type="InterPro" id="IPR007383">
    <property type="entry name" value="DUF445"/>
</dbReference>
<dbReference type="InterPro" id="IPR016991">
    <property type="entry name" value="UCP032178"/>
</dbReference>
<dbReference type="PANTHER" id="PTHR35791">
    <property type="entry name" value="UPF0754 MEMBRANE PROTEIN YHEB"/>
    <property type="match status" value="1"/>
</dbReference>
<dbReference type="PANTHER" id="PTHR35791:SF1">
    <property type="entry name" value="UPF0754 MEMBRANE PROTEIN YHEB"/>
    <property type="match status" value="1"/>
</dbReference>
<dbReference type="Pfam" id="PF04286">
    <property type="entry name" value="DUF445"/>
    <property type="match status" value="1"/>
</dbReference>
<dbReference type="PIRSF" id="PIRSF032178">
    <property type="entry name" value="UCP032178"/>
    <property type="match status" value="1"/>
</dbReference>
<accession>B7GF17</accession>
<protein>
    <recommendedName>
        <fullName>UPF0754 membrane protein Aflv_2299</fullName>
    </recommendedName>
</protein>
<comment type="subcellular location">
    <subcellularLocation>
        <location evidence="1">Cell membrane</location>
        <topology evidence="1">Multi-pass membrane protein</topology>
    </subcellularLocation>
</comment>
<comment type="similarity">
    <text evidence="3">Belongs to the UPF0754 family.</text>
</comment>
<comment type="sequence caution" evidence="3">
    <conflict type="erroneous initiation">
        <sequence resource="EMBL-CDS" id="ACJ34656"/>
    </conflict>
</comment>
<sequence>MGLFLYLLFMIVVGAFIGGMTNSLAIKMLFRPYRPIYIAGKRLPFTPGLIPKRREELAEQLGRMVVEHLLTAEGLRRKLNDPSFVQDMTSYVQEEVEKWLQSDRTVEQWLKQFGMPDPKQTAETWIETKYKTFMSQYRQRPLHEIIPIDVLHKIDHAIPSIVDRLLLRLRTYIESEQGERQIEHMINEFLQSRGMFGNMLQMFLGNVSLAEKIRPEIVKFLQSEGAKQLLVQLFINEWEKVKEMRIHEVEQIIDQEKIVVWVKRLTASIVQEPLQKPLGALVAPYVRHSLPTLVRFLLQFASERIERWMKQLHLQDIVREEVASFSVERLEEMILTISRREFKMITYLGALLGGIIGLIQGCITFFVQM</sequence>
<evidence type="ECO:0000250" key="1"/>
<evidence type="ECO:0000255" key="2"/>
<evidence type="ECO:0000305" key="3"/>
<gene>
    <name type="ordered locus">Aflv_2299</name>
</gene>
<proteinExistence type="inferred from homology"/>
<reference key="1">
    <citation type="journal article" date="2008" name="Genome Biol.">
        <title>Encapsulated in silica: genome, proteome and physiology of the thermophilic bacterium Anoxybacillus flavithermus WK1.</title>
        <authorList>
            <person name="Saw J.H."/>
            <person name="Mountain B.W."/>
            <person name="Feng L."/>
            <person name="Omelchenko M.V."/>
            <person name="Hou S."/>
            <person name="Saito J.A."/>
            <person name="Stott M.B."/>
            <person name="Li D."/>
            <person name="Zhao G."/>
            <person name="Wu J."/>
            <person name="Galperin M.Y."/>
            <person name="Koonin E.V."/>
            <person name="Makarova K.S."/>
            <person name="Wolf Y.I."/>
            <person name="Rigden D.J."/>
            <person name="Dunfield P.F."/>
            <person name="Wang L."/>
            <person name="Alam M."/>
        </authorList>
    </citation>
    <scope>NUCLEOTIDE SEQUENCE [LARGE SCALE GENOMIC DNA]</scope>
    <source>
        <strain>DSM 21510 / WK1</strain>
    </source>
</reference>
<feature type="chain" id="PRO_0000388263" description="UPF0754 membrane protein Aflv_2299">
    <location>
        <begin position="1"/>
        <end position="369"/>
    </location>
</feature>
<feature type="transmembrane region" description="Helical" evidence="2">
    <location>
        <begin position="1"/>
        <end position="21"/>
    </location>
</feature>
<feature type="transmembrane region" description="Helical" evidence="2">
    <location>
        <begin position="347"/>
        <end position="367"/>
    </location>
</feature>
<keyword id="KW-1003">Cell membrane</keyword>
<keyword id="KW-0472">Membrane</keyword>
<keyword id="KW-0812">Transmembrane</keyword>
<keyword id="KW-1133">Transmembrane helix</keyword>
<name>Y2299_ANOFW</name>